<gene>
    <name evidence="1" type="primary">rnpA</name>
    <name type="ordered locus">BPEN_013</name>
</gene>
<name>RNPA_BLOPB</name>
<dbReference type="EC" id="3.1.26.5" evidence="1"/>
<dbReference type="EMBL" id="CP000016">
    <property type="protein sequence ID" value="AAZ40663.1"/>
    <property type="molecule type" value="Genomic_DNA"/>
</dbReference>
<dbReference type="RefSeq" id="WP_011282569.1">
    <property type="nucleotide sequence ID" value="NC_007292.1"/>
</dbReference>
<dbReference type="SMR" id="Q494B8"/>
<dbReference type="STRING" id="291272.BPEN_013"/>
<dbReference type="KEGG" id="bpn:BPEN_013"/>
<dbReference type="eggNOG" id="COG0594">
    <property type="taxonomic scope" value="Bacteria"/>
</dbReference>
<dbReference type="HOGENOM" id="CLU_117179_11_0_6"/>
<dbReference type="OrthoDB" id="9796422at2"/>
<dbReference type="Proteomes" id="UP000007794">
    <property type="component" value="Chromosome"/>
</dbReference>
<dbReference type="GO" id="GO:0030677">
    <property type="term" value="C:ribonuclease P complex"/>
    <property type="evidence" value="ECO:0007669"/>
    <property type="project" value="TreeGrafter"/>
</dbReference>
<dbReference type="GO" id="GO:0042781">
    <property type="term" value="F:3'-tRNA processing endoribonuclease activity"/>
    <property type="evidence" value="ECO:0007669"/>
    <property type="project" value="TreeGrafter"/>
</dbReference>
<dbReference type="GO" id="GO:0004526">
    <property type="term" value="F:ribonuclease P activity"/>
    <property type="evidence" value="ECO:0007669"/>
    <property type="project" value="UniProtKB-UniRule"/>
</dbReference>
<dbReference type="GO" id="GO:0000049">
    <property type="term" value="F:tRNA binding"/>
    <property type="evidence" value="ECO:0007669"/>
    <property type="project" value="UniProtKB-UniRule"/>
</dbReference>
<dbReference type="GO" id="GO:0001682">
    <property type="term" value="P:tRNA 5'-leader removal"/>
    <property type="evidence" value="ECO:0007669"/>
    <property type="project" value="UniProtKB-UniRule"/>
</dbReference>
<dbReference type="Gene3D" id="3.30.230.10">
    <property type="match status" value="1"/>
</dbReference>
<dbReference type="HAMAP" id="MF_00227">
    <property type="entry name" value="RNase_P"/>
    <property type="match status" value="1"/>
</dbReference>
<dbReference type="InterPro" id="IPR020568">
    <property type="entry name" value="Ribosomal_Su5_D2-typ_SF"/>
</dbReference>
<dbReference type="InterPro" id="IPR014721">
    <property type="entry name" value="Ribsml_uS5_D2-typ_fold_subgr"/>
</dbReference>
<dbReference type="InterPro" id="IPR000100">
    <property type="entry name" value="RNase_P"/>
</dbReference>
<dbReference type="InterPro" id="IPR020539">
    <property type="entry name" value="RNase_P_CS"/>
</dbReference>
<dbReference type="NCBIfam" id="TIGR00188">
    <property type="entry name" value="rnpA"/>
    <property type="match status" value="1"/>
</dbReference>
<dbReference type="PANTHER" id="PTHR33992">
    <property type="entry name" value="RIBONUCLEASE P PROTEIN COMPONENT"/>
    <property type="match status" value="1"/>
</dbReference>
<dbReference type="PANTHER" id="PTHR33992:SF1">
    <property type="entry name" value="RIBONUCLEASE P PROTEIN COMPONENT"/>
    <property type="match status" value="1"/>
</dbReference>
<dbReference type="Pfam" id="PF00825">
    <property type="entry name" value="Ribonuclease_P"/>
    <property type="match status" value="1"/>
</dbReference>
<dbReference type="SUPFAM" id="SSF54211">
    <property type="entry name" value="Ribosomal protein S5 domain 2-like"/>
    <property type="match status" value="1"/>
</dbReference>
<dbReference type="PROSITE" id="PS00648">
    <property type="entry name" value="RIBONUCLEASE_P"/>
    <property type="match status" value="1"/>
</dbReference>
<reference key="1">
    <citation type="journal article" date="2005" name="Genome Res.">
        <title>Genome sequence of Blochmannia pennsylvanicus indicates parallel evolutionary trends among bacterial mutualists of insects.</title>
        <authorList>
            <person name="Degnan P.H."/>
            <person name="Lazarus A.B."/>
            <person name="Wernegreen J.J."/>
        </authorList>
    </citation>
    <scope>NUCLEOTIDE SEQUENCE [LARGE SCALE GENOMIC DNA]</scope>
    <source>
        <strain>BPEN</strain>
    </source>
</reference>
<organism>
    <name type="scientific">Blochmanniella pennsylvanica (strain BPEN)</name>
    <dbReference type="NCBI Taxonomy" id="291272"/>
    <lineage>
        <taxon>Bacteria</taxon>
        <taxon>Pseudomonadati</taxon>
        <taxon>Pseudomonadota</taxon>
        <taxon>Gammaproteobacteria</taxon>
        <taxon>Enterobacterales</taxon>
        <taxon>Enterobacteriaceae</taxon>
        <taxon>ant endosymbionts</taxon>
        <taxon>Candidatus Blochmanniella</taxon>
    </lineage>
</organism>
<protein>
    <recommendedName>
        <fullName evidence="1">Ribonuclease P protein component</fullName>
        <shortName evidence="1">RNase P protein</shortName>
        <shortName evidence="1">RNaseP protein</shortName>
        <ecNumber evidence="1">3.1.26.5</ecNumber>
    </recommendedName>
    <alternativeName>
        <fullName evidence="1">Protein C5</fullName>
    </alternativeName>
</protein>
<keyword id="KW-0255">Endonuclease</keyword>
<keyword id="KW-0378">Hydrolase</keyword>
<keyword id="KW-0540">Nuclease</keyword>
<keyword id="KW-1185">Reference proteome</keyword>
<keyword id="KW-0694">RNA-binding</keyword>
<keyword id="KW-0819">tRNA processing</keyword>
<proteinExistence type="inferred from homology"/>
<evidence type="ECO:0000255" key="1">
    <source>
        <dbReference type="HAMAP-Rule" id="MF_00227"/>
    </source>
</evidence>
<sequence>MNRKFLPKRARLLNLNEFIFVFQKPERVKTTGITLFSRSNRLGYPRIGLAISKKYVKYAHERNRIKRHIRETFRTCQHNLLAKDFVLTIRSKEIIYYKNKTLIQELEKLWYHHLC</sequence>
<comment type="function">
    <text evidence="1">RNaseP catalyzes the removal of the 5'-leader sequence from pre-tRNA to produce the mature 5'-terminus. It can also cleave other RNA substrates such as 4.5S RNA. The protein component plays an auxiliary but essential role in vivo by binding to the 5'-leader sequence and broadening the substrate specificity of the ribozyme.</text>
</comment>
<comment type="catalytic activity">
    <reaction evidence="1">
        <text>Endonucleolytic cleavage of RNA, removing 5'-extranucleotides from tRNA precursor.</text>
        <dbReference type="EC" id="3.1.26.5"/>
    </reaction>
</comment>
<comment type="subunit">
    <text evidence="1">Consists of a catalytic RNA component (M1 or rnpB) and a protein subunit.</text>
</comment>
<comment type="similarity">
    <text evidence="1">Belongs to the RnpA family.</text>
</comment>
<accession>Q494B8</accession>
<feature type="chain" id="PRO_1000021378" description="Ribonuclease P protein component">
    <location>
        <begin position="1"/>
        <end position="115"/>
    </location>
</feature>